<dbReference type="EMBL" id="Z32564">
    <property type="protein sequence ID" value="CAA83553.1"/>
    <property type="status" value="ALT_INIT"/>
    <property type="molecule type" value="mRNA"/>
</dbReference>
<dbReference type="EMBL" id="Z32633">
    <property type="protein sequence ID" value="CAA83566.1"/>
    <property type="status" value="ALT_INIT"/>
    <property type="molecule type" value="mRNA"/>
</dbReference>
<dbReference type="EMBL" id="U08471">
    <property type="protein sequence ID" value="AAA18382.1"/>
    <property type="status" value="ALT_INIT"/>
    <property type="molecule type" value="mRNA"/>
</dbReference>
<dbReference type="EMBL" id="U08470">
    <property type="protein sequence ID" value="AAA18381.1"/>
    <property type="status" value="ALT_INIT"/>
    <property type="molecule type" value="mRNA"/>
</dbReference>
<dbReference type="EMBL" id="AP000812">
    <property type="status" value="NOT_ANNOTATED_CDS"/>
    <property type="molecule type" value="Genomic_DNA"/>
</dbReference>
<dbReference type="EMBL" id="KF459676">
    <property type="status" value="NOT_ANNOTATED_CDS"/>
    <property type="molecule type" value="Genomic_DNA"/>
</dbReference>
<dbReference type="EMBL" id="BC030285">
    <property type="protein sequence ID" value="AAH30285.1"/>
    <property type="molecule type" value="mRNA"/>
</dbReference>
<dbReference type="CCDS" id="CCDS73344.1">
    <molecule id="P41439-1"/>
</dbReference>
<dbReference type="PIR" id="A53506">
    <property type="entry name" value="A53506"/>
</dbReference>
<dbReference type="RefSeq" id="NP_000795.2">
    <molecule id="P41439-1"/>
    <property type="nucleotide sequence ID" value="NM_000804.4"/>
</dbReference>
<dbReference type="RefSeq" id="NP_001304974.1">
    <property type="nucleotide sequence ID" value="NM_001318045.1"/>
</dbReference>
<dbReference type="SMR" id="P41439"/>
<dbReference type="BioGRID" id="108635">
    <property type="interactions" value="6"/>
</dbReference>
<dbReference type="FunCoup" id="P41439">
    <property type="interactions" value="264"/>
</dbReference>
<dbReference type="IntAct" id="P41439">
    <property type="interactions" value="5"/>
</dbReference>
<dbReference type="STRING" id="9606.ENSP00000481114"/>
<dbReference type="DrugBank" id="DB00158">
    <property type="generic name" value="Folic acid"/>
</dbReference>
<dbReference type="DrugBank" id="DB05168">
    <property type="generic name" value="Vintafolide"/>
</dbReference>
<dbReference type="GlyCosmos" id="P41439">
    <property type="glycosylation" value="3 sites, No reported glycans"/>
</dbReference>
<dbReference type="GlyGen" id="P41439">
    <property type="glycosylation" value="4 sites"/>
</dbReference>
<dbReference type="iPTMnet" id="P41439"/>
<dbReference type="PhosphoSitePlus" id="P41439"/>
<dbReference type="BioMuta" id="FOLR3"/>
<dbReference type="DMDM" id="1169723"/>
<dbReference type="MassIVE" id="P41439"/>
<dbReference type="PaxDb" id="9606-ENSP00000481114"/>
<dbReference type="PeptideAtlas" id="P41439"/>
<dbReference type="ProteomicsDB" id="55460">
    <molecule id="P41439-1"/>
</dbReference>
<dbReference type="Antibodypedia" id="30810">
    <property type="antibodies" value="135 antibodies from 22 providers"/>
</dbReference>
<dbReference type="DNASU" id="2352"/>
<dbReference type="Ensembl" id="ENST00000611028.3">
    <molecule id="P41439-1"/>
    <property type="protein sequence ID" value="ENSP00000481114.1"/>
    <property type="gene ID" value="ENSG00000110203.10"/>
</dbReference>
<dbReference type="Ensembl" id="ENST00000612844.4">
    <molecule id="P41439-4"/>
    <property type="protein sequence ID" value="ENSP00000481027.1"/>
    <property type="gene ID" value="ENSG00000110203.10"/>
</dbReference>
<dbReference type="GeneID" id="2352"/>
<dbReference type="KEGG" id="hsa:2352"/>
<dbReference type="MANE-Select" id="ENST00000611028.3">
    <property type="protein sequence ID" value="ENSP00000481114.1"/>
    <property type="RefSeq nucleotide sequence ID" value="NM_000804.4"/>
    <property type="RefSeq protein sequence ID" value="NP_000795.2"/>
</dbReference>
<dbReference type="UCSC" id="uc058ezu.1">
    <molecule id="P41439-1"/>
    <property type="organism name" value="human"/>
</dbReference>
<dbReference type="AGR" id="HGNC:3795"/>
<dbReference type="CTD" id="2352"/>
<dbReference type="DisGeNET" id="2352"/>
<dbReference type="GeneCards" id="FOLR3"/>
<dbReference type="HGNC" id="HGNC:3795">
    <property type="gene designation" value="FOLR3"/>
</dbReference>
<dbReference type="HPA" id="ENSG00000110203">
    <property type="expression patterns" value="Tissue enriched (bone)"/>
</dbReference>
<dbReference type="MIM" id="602469">
    <property type="type" value="gene"/>
</dbReference>
<dbReference type="neXtProt" id="NX_P41439"/>
<dbReference type="OpenTargets" id="ENSG00000110203"/>
<dbReference type="PharmGKB" id="PA28211"/>
<dbReference type="VEuPathDB" id="HostDB:ENSG00000110203"/>
<dbReference type="eggNOG" id="KOG3656">
    <property type="taxonomic scope" value="Eukaryota"/>
</dbReference>
<dbReference type="GeneTree" id="ENSGT00950000183144"/>
<dbReference type="HOGENOM" id="CLU_070826_3_0_1"/>
<dbReference type="InParanoid" id="P41439"/>
<dbReference type="OMA" id="HFIQDGC"/>
<dbReference type="OrthoDB" id="567542at2759"/>
<dbReference type="PAN-GO" id="P41439">
    <property type="GO annotations" value="5 GO annotations based on evolutionary models"/>
</dbReference>
<dbReference type="PhylomeDB" id="P41439"/>
<dbReference type="PathwayCommons" id="P41439"/>
<dbReference type="Reactome" id="R-HSA-6798695">
    <property type="pathway name" value="Neutrophil degranulation"/>
</dbReference>
<dbReference type="SignaLink" id="P41439"/>
<dbReference type="BioGRID-ORCS" id="2352">
    <property type="hits" value="13 hits in 359 CRISPR screens"/>
</dbReference>
<dbReference type="ChiTaRS" id="FOLR3">
    <property type="organism name" value="human"/>
</dbReference>
<dbReference type="GenomeRNAi" id="2352"/>
<dbReference type="Pharos" id="P41439">
    <property type="development level" value="Tbio"/>
</dbReference>
<dbReference type="PRO" id="PR:P41439"/>
<dbReference type="Proteomes" id="UP000005640">
    <property type="component" value="Chromosome 11"/>
</dbReference>
<dbReference type="RNAct" id="P41439">
    <property type="molecule type" value="protein"/>
</dbReference>
<dbReference type="Bgee" id="ENSG00000110203">
    <property type="expression patterns" value="Expressed in granulocyte and 129 other cell types or tissues"/>
</dbReference>
<dbReference type="ExpressionAtlas" id="P41439">
    <property type="expression patterns" value="baseline and differential"/>
</dbReference>
<dbReference type="GO" id="GO:0009897">
    <property type="term" value="C:external side of plasma membrane"/>
    <property type="evidence" value="ECO:0000318"/>
    <property type="project" value="GO_Central"/>
</dbReference>
<dbReference type="GO" id="GO:0005576">
    <property type="term" value="C:extracellular region"/>
    <property type="evidence" value="ECO:0000304"/>
    <property type="project" value="Reactome"/>
</dbReference>
<dbReference type="GO" id="GO:0019898">
    <property type="term" value="C:extrinsic component of membrane"/>
    <property type="evidence" value="ECO:0000304"/>
    <property type="project" value="ProtInc"/>
</dbReference>
<dbReference type="GO" id="GO:0016020">
    <property type="term" value="C:membrane"/>
    <property type="evidence" value="ECO:0000304"/>
    <property type="project" value="ProtInc"/>
</dbReference>
<dbReference type="GO" id="GO:0035580">
    <property type="term" value="C:specific granule lumen"/>
    <property type="evidence" value="ECO:0000304"/>
    <property type="project" value="Reactome"/>
</dbReference>
<dbReference type="GO" id="GO:1904724">
    <property type="term" value="C:tertiary granule lumen"/>
    <property type="evidence" value="ECO:0000304"/>
    <property type="project" value="Reactome"/>
</dbReference>
<dbReference type="GO" id="GO:0005542">
    <property type="term" value="F:folic acid binding"/>
    <property type="evidence" value="ECO:0000304"/>
    <property type="project" value="ProtInc"/>
</dbReference>
<dbReference type="GO" id="GO:0038023">
    <property type="term" value="F:signaling receptor activity"/>
    <property type="evidence" value="ECO:0000318"/>
    <property type="project" value="GO_Central"/>
</dbReference>
<dbReference type="GO" id="GO:0007155">
    <property type="term" value="P:cell adhesion"/>
    <property type="evidence" value="ECO:0000318"/>
    <property type="project" value="GO_Central"/>
</dbReference>
<dbReference type="GO" id="GO:0015884">
    <property type="term" value="P:folic acid transport"/>
    <property type="evidence" value="ECO:0000304"/>
    <property type="project" value="ProtInc"/>
</dbReference>
<dbReference type="GO" id="GO:0007342">
    <property type="term" value="P:fusion of sperm to egg plasma membrane involved in single fertilization"/>
    <property type="evidence" value="ECO:0000318"/>
    <property type="project" value="GO_Central"/>
</dbReference>
<dbReference type="GO" id="GO:0035036">
    <property type="term" value="P:sperm-egg recognition"/>
    <property type="evidence" value="ECO:0000318"/>
    <property type="project" value="GO_Central"/>
</dbReference>
<dbReference type="InterPro" id="IPR004269">
    <property type="entry name" value="Folate_rcpt"/>
</dbReference>
<dbReference type="InterPro" id="IPR018143">
    <property type="entry name" value="Folate_rcpt-like"/>
</dbReference>
<dbReference type="PANTHER" id="PTHR10517">
    <property type="entry name" value="FOLATE RECEPTOR"/>
    <property type="match status" value="1"/>
</dbReference>
<dbReference type="PANTHER" id="PTHR10517:SF17">
    <property type="entry name" value="FOLATE RECEPTOR GAMMA"/>
    <property type="match status" value="1"/>
</dbReference>
<dbReference type="Pfam" id="PF03024">
    <property type="entry name" value="Folate_rec"/>
    <property type="match status" value="1"/>
</dbReference>
<name>FOLR3_HUMAN</name>
<evidence type="ECO:0000250" key="1">
    <source>
        <dbReference type="UniProtKB" id="P15328"/>
    </source>
</evidence>
<evidence type="ECO:0000255" key="2"/>
<evidence type="ECO:0000269" key="3">
    <source>
    </source>
</evidence>
<evidence type="ECO:0000305" key="4"/>
<reference key="1">
    <citation type="journal article" date="1994" name="Biochemistry">
        <title>Identification of a novel folate receptor, a truncated receptor, and receptor type beta in hematopoietic cells: cDNA cloning, expression, immunoreactivity, and tissue specificity.</title>
        <authorList>
            <person name="Shen F."/>
            <person name="Ross J.F."/>
            <person name="Wang X."/>
            <person name="Ratnam M."/>
        </authorList>
    </citation>
    <scope>NUCLEOTIDE SEQUENCE [MRNA] (ISOFORM 1)</scope>
    <scope>VARIANT 107-TYR--SER-245 DEL</scope>
    <source>
        <tissue>Hematopoietic</tissue>
    </source>
</reference>
<reference key="2">
    <citation type="journal article" date="2006" name="Nature">
        <title>Human chromosome 11 DNA sequence and analysis including novel gene identification.</title>
        <authorList>
            <person name="Taylor T.D."/>
            <person name="Noguchi H."/>
            <person name="Totoki Y."/>
            <person name="Toyoda A."/>
            <person name="Kuroki Y."/>
            <person name="Dewar K."/>
            <person name="Lloyd C."/>
            <person name="Itoh T."/>
            <person name="Takeda T."/>
            <person name="Kim D.-W."/>
            <person name="She X."/>
            <person name="Barlow K.F."/>
            <person name="Bloom T."/>
            <person name="Bruford E."/>
            <person name="Chang J.L."/>
            <person name="Cuomo C.A."/>
            <person name="Eichler E."/>
            <person name="FitzGerald M.G."/>
            <person name="Jaffe D.B."/>
            <person name="LaButti K."/>
            <person name="Nicol R."/>
            <person name="Park H.-S."/>
            <person name="Seaman C."/>
            <person name="Sougnez C."/>
            <person name="Yang X."/>
            <person name="Zimmer A.R."/>
            <person name="Zody M.C."/>
            <person name="Birren B.W."/>
            <person name="Nusbaum C."/>
            <person name="Fujiyama A."/>
            <person name="Hattori M."/>
            <person name="Rogers J."/>
            <person name="Lander E.S."/>
            <person name="Sakaki Y."/>
        </authorList>
    </citation>
    <scope>NUCLEOTIDE SEQUENCE [LARGE SCALE GENOMIC DNA]</scope>
</reference>
<reference key="3">
    <citation type="journal article" date="2004" name="Genome Res.">
        <title>The status, quality, and expansion of the NIH full-length cDNA project: the Mammalian Gene Collection (MGC).</title>
        <authorList>
            <consortium name="The MGC Project Team"/>
        </authorList>
    </citation>
    <scope>NUCLEOTIDE SEQUENCE [LARGE SCALE MRNA] (ISOFORM 2)</scope>
    <source>
        <tissue>Pancreas</tissue>
    </source>
</reference>
<reference key="4">
    <citation type="journal article" date="1995" name="Biochemistry">
        <title>Folate receptor type gamma is primarily a secretory protein due to lack of an efficient signal for glycosylphosphatidylinositol modification: protein characterization and cell type specificity.</title>
        <authorList>
            <person name="Shen F."/>
            <person name="Wu M."/>
            <person name="Ross J.F."/>
            <person name="Miller D."/>
            <person name="Ratnam M."/>
        </authorList>
    </citation>
    <scope>CHARACTERIZATION</scope>
</reference>
<reference key="5">
    <citation type="journal article" date="2004" name="Genome Biol.">
        <title>An unappreciated role for RNA surveillance.</title>
        <authorList>
            <person name="Hillman R.T."/>
            <person name="Green R.E."/>
            <person name="Brenner S.E."/>
        </authorList>
    </citation>
    <scope>SPLICE ISOFORM(S) THAT ARE POTENTIAL NMD TARGET(S)</scope>
</reference>
<organism>
    <name type="scientific">Homo sapiens</name>
    <name type="common">Human</name>
    <dbReference type="NCBI Taxonomy" id="9606"/>
    <lineage>
        <taxon>Eukaryota</taxon>
        <taxon>Metazoa</taxon>
        <taxon>Chordata</taxon>
        <taxon>Craniata</taxon>
        <taxon>Vertebrata</taxon>
        <taxon>Euteleostomi</taxon>
        <taxon>Mammalia</taxon>
        <taxon>Eutheria</taxon>
        <taxon>Euarchontoglires</taxon>
        <taxon>Primates</taxon>
        <taxon>Haplorrhini</taxon>
        <taxon>Catarrhini</taxon>
        <taxon>Hominidae</taxon>
        <taxon>Homo</taxon>
    </lineage>
</organism>
<accession>P41439</accession>
<accession>A0A087WXH3</accession>
<accession>J3KQ90</accession>
<accession>Q05C14</accession>
<feature type="signal peptide" evidence="2">
    <location>
        <begin position="1"/>
        <end position="22"/>
    </location>
</feature>
<feature type="chain" id="PRO_0000008810" description="Folate receptor gamma">
    <location>
        <begin position="23"/>
        <end position="245"/>
    </location>
</feature>
<feature type="binding site" evidence="1">
    <location>
        <position position="103"/>
    </location>
    <ligand>
        <name>folate</name>
        <dbReference type="ChEBI" id="CHEBI:62501"/>
    </ligand>
</feature>
<feature type="binding site" evidence="1">
    <location>
        <position position="107"/>
    </location>
    <ligand>
        <name>folate</name>
        <dbReference type="ChEBI" id="CHEBI:62501"/>
    </ligand>
</feature>
<feature type="binding site" evidence="1">
    <location>
        <begin position="124"/>
        <end position="128"/>
    </location>
    <ligand>
        <name>folate</name>
        <dbReference type="ChEBI" id="CHEBI:62501"/>
    </ligand>
</feature>
<feature type="binding site" evidence="1">
    <location>
        <begin position="157"/>
        <end position="162"/>
    </location>
    <ligand>
        <name>folate</name>
        <dbReference type="ChEBI" id="CHEBI:62501"/>
    </ligand>
</feature>
<feature type="binding site" evidence="1">
    <location>
        <position position="196"/>
    </location>
    <ligand>
        <name>folate</name>
        <dbReference type="ChEBI" id="CHEBI:62501"/>
    </ligand>
</feature>
<feature type="glycosylation site" description="N-linked (GlcNAc...) asparagine" evidence="2">
    <location>
        <position position="121"/>
    </location>
</feature>
<feature type="glycosylation site" description="N-linked (GlcNAc...) asparagine" evidence="2">
    <location>
        <position position="161"/>
    </location>
</feature>
<feature type="glycosylation site" description="N-linked (GlcNAc...) asparagine" evidence="2">
    <location>
        <position position="201"/>
    </location>
</feature>
<feature type="disulfide bond" evidence="1">
    <location>
        <begin position="37"/>
        <end position="65"/>
    </location>
</feature>
<feature type="disulfide bond" evidence="1">
    <location>
        <begin position="57"/>
        <end position="105"/>
    </location>
</feature>
<feature type="disulfide bond" evidence="1">
    <location>
        <begin position="66"/>
        <end position="109"/>
    </location>
</feature>
<feature type="disulfide bond" evidence="1">
    <location>
        <begin position="89"/>
        <end position="175"/>
    </location>
</feature>
<feature type="disulfide bond" evidence="1">
    <location>
        <begin position="96"/>
        <end position="146"/>
    </location>
</feature>
<feature type="disulfide bond" evidence="1">
    <location>
        <begin position="135"/>
        <end position="209"/>
    </location>
</feature>
<feature type="disulfide bond" evidence="1">
    <location>
        <begin position="139"/>
        <end position="189"/>
    </location>
</feature>
<feature type="disulfide bond" evidence="1">
    <location>
        <begin position="152"/>
        <end position="169"/>
    </location>
</feature>
<feature type="splice variant" id="VSP_060090" description="In isoform 2.">
    <original>CSPWKKNACCTASTSQELHKDTSRLYNFNWDHCGKMEPTCKRHFIQDSCLYECSPNLGPWIRQVNQSWRKERILNVPLCKEDCERWWEDCRTSYTCKSNWHKGWNWTSGINECPAG</original>
    <variation>VGAPQGPSPGSVPLDDLPGAEEPEYGGDGCGGERLSPVSSPPSAVPGRRMPAARPAPARSCTRTPPACTTLTGITVVRWNPPASATLSRTAVSMSAHPTWGPGSGRSTRAGAKSAF</variation>
    <location>
        <begin position="57"/>
        <end position="172"/>
    </location>
</feature>
<feature type="splice variant" id="VSP_060091" description="In isoform 2.">
    <location>
        <begin position="173"/>
        <end position="245"/>
    </location>
</feature>
<feature type="sequence variant" id="VAR_081429" evidence="3">
    <location>
        <begin position="107"/>
        <end position="245"/>
    </location>
</feature>
<feature type="sequence conflict" description="In Ref. 3; AAH30285." evidence="4" ref="3">
    <original>T</original>
    <variation>I</variation>
    <location>
        <position position="45"/>
    </location>
</feature>
<feature type="sequence conflict" description="In Ref. 3; AAH30285." evidence="4" ref="3">
    <original>E</original>
    <variation>V</variation>
    <location sequence="P41439-4">
        <position position="78"/>
    </location>
</feature>
<comment type="function">
    <text>Binds to folate and reduced folic acid derivatives and mediates delivery of 5-methyltetrahydrofolate to the interior of cells. Isoform Short does not bind folate.</text>
</comment>
<comment type="interaction">
    <interactant intactId="EBI-12893875">
        <id>P41439</id>
    </interactant>
    <interactant intactId="EBI-17183751">
        <id>X5D778</id>
        <label>ANKRD11</label>
    </interactant>
    <organismsDiffer>false</organismsDiffer>
    <experiments>3</experiments>
</comment>
<comment type="interaction">
    <interactant intactId="EBI-12893875">
        <id>P41439</id>
    </interactant>
    <interactant intactId="EBI-741480">
        <id>Q9UMX0</id>
        <label>UBQLN1</label>
    </interactant>
    <organismsDiffer>false</organismsDiffer>
    <experiments>3</experiments>
</comment>
<comment type="subcellular location">
    <subcellularLocation>
        <location>Secreted</location>
    </subcellularLocation>
</comment>
<comment type="alternative products">
    <event type="alternative splicing"/>
    <isoform>
        <id>P41439-1</id>
        <name>1</name>
        <name>Long</name>
        <sequence type="displayed"/>
    </isoform>
    <isoform>
        <id>P41439-4</id>
        <name>2</name>
        <sequence type="described" ref="VSP_060090 VSP_060091"/>
    </isoform>
</comment>
<comment type="tissue specificity">
    <text>Spleen, thymus, bone marrow, ovarian carcinoma, and uterine carcinoma.</text>
</comment>
<comment type="miscellaneous">
    <molecule>Isoform 2</molecule>
    <text evidence="4">May be produced at very low levels due to a premature stop codon in the mRNA, leading to nonsense-mediated mRNA decay. Variant in position: 150:MSAHPTWGPGSGRSTRAGAKSAF-&gt;ECSPNLGPWIRQVNQSWRKERILNVPLCKEDCERW WEDCRTSYTCKSNWHKGWNWTSGINECPAGALCSTFESYFPTPAALCEGLWSHSFKVSNYSRG.</text>
</comment>
<comment type="similarity">
    <text evidence="4">Belongs to the folate receptor family.</text>
</comment>
<comment type="caution">
    <text evidence="4">It is uncertain whether Met-1 or Met-3 is the initiator.</text>
</comment>
<comment type="sequence caution" evidence="4">
    <conflict type="erroneous initiation">
        <sequence resource="EMBL-CDS" id="AAA18381"/>
    </conflict>
    <text>Truncated N-terminus.</text>
</comment>
<comment type="sequence caution" evidence="4">
    <conflict type="erroneous initiation">
        <sequence resource="EMBL-CDS" id="AAA18382"/>
    </conflict>
    <text>Truncated N-terminus.</text>
</comment>
<comment type="sequence caution" evidence="4">
    <conflict type="erroneous initiation">
        <sequence resource="EMBL-CDS" id="CAA83553"/>
    </conflict>
    <text>Truncated N-terminus.</text>
</comment>
<comment type="sequence caution" evidence="4">
    <conflict type="erroneous initiation">
        <sequence resource="EMBL-CDS" id="CAA83566"/>
    </conflict>
    <text>Truncated N-terminus.</text>
</comment>
<keyword id="KW-0025">Alternative splicing</keyword>
<keyword id="KW-1015">Disulfide bond</keyword>
<keyword id="KW-0290">Folate-binding</keyword>
<keyword id="KW-0325">Glycoprotein</keyword>
<keyword id="KW-1267">Proteomics identification</keyword>
<keyword id="KW-0675">Receptor</keyword>
<keyword id="KW-1185">Reference proteome</keyword>
<keyword id="KW-0964">Secreted</keyword>
<keyword id="KW-0732">Signal</keyword>
<proteinExistence type="evidence at protein level"/>
<protein>
    <recommendedName>
        <fullName>Folate receptor gamma</fullName>
        <shortName>FR-gamma</shortName>
    </recommendedName>
    <alternativeName>
        <fullName>Folate receptor 3</fullName>
    </alternativeName>
</protein>
<gene>
    <name type="primary">FOLR3</name>
</gene>
<sequence>MDMAWQMMQLLLLALVTAAGSAQPRSARARTDLLNVCMNAKHHKTQPSPEDELYGQCSPWKKNACCTASTSQELHKDTSRLYNFNWDHCGKMEPTCKRHFIQDSCLYECSPNLGPWIRQVNQSWRKERILNVPLCKEDCERWWEDCRTSYTCKSNWHKGWNWTSGINECPAGALCSTFESYFPTPAALCEGLWSHSFKVSNYSRGSGRCIQMWFDSAQGNPNEEVAKFYAAAMNAGAPSRGIIDS</sequence>